<keyword id="KW-1185">Reference proteome</keyword>
<feature type="chain" id="PRO_0000072776" description="Putative double-stranded DNA mimic protein YciU">
    <location>
        <begin position="1"/>
        <end position="109"/>
    </location>
</feature>
<sequence length="109" mass="12687">MDMDLNNRLTEDETLEQAYDIFLELAADNLDPADVLLFNLQFEERGGAELFDPAEDWQEHVDFDLNPDFFAEVVIGLADSEDGEINDVFARILLCREKDHKLCHIIWRE</sequence>
<name>YCIU_ECO57</name>
<reference key="1">
    <citation type="journal article" date="2001" name="Nature">
        <title>Genome sequence of enterohaemorrhagic Escherichia coli O157:H7.</title>
        <authorList>
            <person name="Perna N.T."/>
            <person name="Plunkett G. III"/>
            <person name="Burland V."/>
            <person name="Mau B."/>
            <person name="Glasner J.D."/>
            <person name="Rose D.J."/>
            <person name="Mayhew G.F."/>
            <person name="Evans P.S."/>
            <person name="Gregor J."/>
            <person name="Kirkpatrick H.A."/>
            <person name="Posfai G."/>
            <person name="Hackett J."/>
            <person name="Klink S."/>
            <person name="Boutin A."/>
            <person name="Shao Y."/>
            <person name="Miller L."/>
            <person name="Grotbeck E.J."/>
            <person name="Davis N.W."/>
            <person name="Lim A."/>
            <person name="Dimalanta E.T."/>
            <person name="Potamousis K."/>
            <person name="Apodaca J."/>
            <person name="Anantharaman T.S."/>
            <person name="Lin J."/>
            <person name="Yen G."/>
            <person name="Schwartz D.C."/>
            <person name="Welch R.A."/>
            <person name="Blattner F.R."/>
        </authorList>
    </citation>
    <scope>NUCLEOTIDE SEQUENCE [LARGE SCALE GENOMIC DNA]</scope>
    <source>
        <strain>O157:H7 / EDL933 / ATCC 700927 / EHEC</strain>
    </source>
</reference>
<reference key="2">
    <citation type="journal article" date="2001" name="DNA Res.">
        <title>Complete genome sequence of enterohemorrhagic Escherichia coli O157:H7 and genomic comparison with a laboratory strain K-12.</title>
        <authorList>
            <person name="Hayashi T."/>
            <person name="Makino K."/>
            <person name="Ohnishi M."/>
            <person name="Kurokawa K."/>
            <person name="Ishii K."/>
            <person name="Yokoyama K."/>
            <person name="Han C.-G."/>
            <person name="Ohtsubo E."/>
            <person name="Nakayama K."/>
            <person name="Murata T."/>
            <person name="Tanaka M."/>
            <person name="Tobe T."/>
            <person name="Iida T."/>
            <person name="Takami H."/>
            <person name="Honda T."/>
            <person name="Sasakawa C."/>
            <person name="Ogasawara N."/>
            <person name="Yasunaga T."/>
            <person name="Kuhara S."/>
            <person name="Shiba T."/>
            <person name="Hattori M."/>
            <person name="Shinagawa H."/>
        </authorList>
    </citation>
    <scope>NUCLEOTIDE SEQUENCE [LARGE SCALE GENOMIC DNA]</scope>
    <source>
        <strain>O157:H7 / Sakai / RIMD 0509952 / EHEC</strain>
    </source>
</reference>
<gene>
    <name evidence="1" type="primary">yciU</name>
    <name type="ordered locus">Z2024</name>
    <name type="ordered locus">ECs1748</name>
</gene>
<protein>
    <recommendedName>
        <fullName evidence="1">Putative double-stranded DNA mimic protein YciU</fullName>
    </recommendedName>
</protein>
<accession>P0A8L9</accession>
<accession>P76028</accession>
<accession>P76830</accession>
<accession>Q8XCC8</accession>
<proteinExistence type="inferred from homology"/>
<dbReference type="EMBL" id="AE005174">
    <property type="protein sequence ID" value="AAG56103.1"/>
    <property type="status" value="ALT_INIT"/>
    <property type="molecule type" value="Genomic_DNA"/>
</dbReference>
<dbReference type="EMBL" id="BA000007">
    <property type="protein sequence ID" value="BAB35171.2"/>
    <property type="molecule type" value="Genomic_DNA"/>
</dbReference>
<dbReference type="RefSeq" id="NP_309775.2">
    <property type="nucleotide sequence ID" value="NC_002695.1"/>
</dbReference>
<dbReference type="RefSeq" id="WP_000366959.1">
    <property type="nucleotide sequence ID" value="NZ_VOAI01000031.1"/>
</dbReference>
<dbReference type="SMR" id="P0A8L9"/>
<dbReference type="STRING" id="155864.Z2024"/>
<dbReference type="GeneID" id="913103"/>
<dbReference type="KEGG" id="ece:Z2024"/>
<dbReference type="KEGG" id="ecs:ECs_1748"/>
<dbReference type="PATRIC" id="fig|386585.9.peg.1850"/>
<dbReference type="eggNOG" id="COG3099">
    <property type="taxonomic scope" value="Bacteria"/>
</dbReference>
<dbReference type="HOGENOM" id="CLU_143392_0_0_6"/>
<dbReference type="OMA" id="SEDWQEH"/>
<dbReference type="Proteomes" id="UP000000558">
    <property type="component" value="Chromosome"/>
</dbReference>
<dbReference type="Proteomes" id="UP000002519">
    <property type="component" value="Chromosome"/>
</dbReference>
<dbReference type="Gene3D" id="3.10.450.140">
    <property type="entry name" value="dsDNA mimic, putative"/>
    <property type="match status" value="1"/>
</dbReference>
<dbReference type="HAMAP" id="MF_00680">
    <property type="entry name" value="Put_dsDNA_mimic"/>
    <property type="match status" value="1"/>
</dbReference>
<dbReference type="InterPro" id="IPR007376">
    <property type="entry name" value="dsDNA_mimic_put"/>
</dbReference>
<dbReference type="InterPro" id="IPR036763">
    <property type="entry name" value="Put_dsDNA_mimic_sf"/>
</dbReference>
<dbReference type="NCBIfam" id="NF003469">
    <property type="entry name" value="PRK05094.1"/>
    <property type="match status" value="1"/>
</dbReference>
<dbReference type="Pfam" id="PF04269">
    <property type="entry name" value="DUF440"/>
    <property type="match status" value="1"/>
</dbReference>
<dbReference type="PIRSF" id="PIRSF004916">
    <property type="entry name" value="UCP004916"/>
    <property type="match status" value="1"/>
</dbReference>
<dbReference type="SUPFAM" id="SSF102816">
    <property type="entry name" value="Putative dsDNA mimic"/>
    <property type="match status" value="1"/>
</dbReference>
<evidence type="ECO:0000255" key="1">
    <source>
        <dbReference type="HAMAP-Rule" id="MF_00680"/>
    </source>
</evidence>
<evidence type="ECO:0000305" key="2"/>
<comment type="function">
    <text evidence="1">May act as a double-stranded DNA (dsDNA) mimic. Probably regulates the activity of a dsDNA-binding protein.</text>
</comment>
<comment type="similarity">
    <text evidence="1">Belongs to the putative dsDNA mimic protein family.</text>
</comment>
<comment type="sequence caution" evidence="2">
    <conflict type="erroneous initiation">
        <sequence resource="EMBL-CDS" id="AAG56103"/>
    </conflict>
    <text>Extended N-terminus.</text>
</comment>
<organism>
    <name type="scientific">Escherichia coli O157:H7</name>
    <dbReference type="NCBI Taxonomy" id="83334"/>
    <lineage>
        <taxon>Bacteria</taxon>
        <taxon>Pseudomonadati</taxon>
        <taxon>Pseudomonadota</taxon>
        <taxon>Gammaproteobacteria</taxon>
        <taxon>Enterobacterales</taxon>
        <taxon>Enterobacteriaceae</taxon>
        <taxon>Escherichia</taxon>
    </lineage>
</organism>